<reference key="1">
    <citation type="journal article" date="1999" name="Genomics">
        <title>Primate evolution of an olfactory receptor cluster: diversification by gene conversion and recent emergence of pseudogenes.</title>
        <authorList>
            <person name="Sharon D."/>
            <person name="Glusman G."/>
            <person name="Pilpel Y."/>
            <person name="Khen M."/>
            <person name="Gruetzner F."/>
            <person name="Haaf T."/>
            <person name="Lancet D."/>
        </authorList>
    </citation>
    <scope>NUCLEOTIDE SEQUENCE [GENOMIC DNA]</scope>
</reference>
<organism>
    <name type="scientific">Pan troglodytes</name>
    <name type="common">Chimpanzee</name>
    <dbReference type="NCBI Taxonomy" id="9598"/>
    <lineage>
        <taxon>Eukaryota</taxon>
        <taxon>Metazoa</taxon>
        <taxon>Chordata</taxon>
        <taxon>Craniata</taxon>
        <taxon>Vertebrata</taxon>
        <taxon>Euteleostomi</taxon>
        <taxon>Mammalia</taxon>
        <taxon>Eutheria</taxon>
        <taxon>Euarchontoglires</taxon>
        <taxon>Primates</taxon>
        <taxon>Haplorrhini</taxon>
        <taxon>Catarrhini</taxon>
        <taxon>Hominidae</taxon>
        <taxon>Pan</taxon>
    </lineage>
</organism>
<feature type="chain" id="PRO_0000150436" description="Olfactory receptor 1G1">
    <location>
        <begin position="1"/>
        <end position="313"/>
    </location>
</feature>
<feature type="topological domain" description="Extracellular" evidence="1">
    <location>
        <begin position="1"/>
        <end position="25"/>
    </location>
</feature>
<feature type="transmembrane region" description="Helical; Name=1" evidence="1">
    <location>
        <begin position="26"/>
        <end position="49"/>
    </location>
</feature>
<feature type="topological domain" description="Cytoplasmic" evidence="1">
    <location>
        <begin position="50"/>
        <end position="57"/>
    </location>
</feature>
<feature type="transmembrane region" description="Helical; Name=2" evidence="1">
    <location>
        <begin position="58"/>
        <end position="79"/>
    </location>
</feature>
<feature type="topological domain" description="Extracellular" evidence="1">
    <location>
        <begin position="80"/>
        <end position="100"/>
    </location>
</feature>
<feature type="transmembrane region" description="Helical; Name=3" evidence="1">
    <location>
        <begin position="101"/>
        <end position="120"/>
    </location>
</feature>
<feature type="topological domain" description="Cytoplasmic" evidence="1">
    <location>
        <begin position="121"/>
        <end position="140"/>
    </location>
</feature>
<feature type="transmembrane region" description="Helical; Name=4" evidence="1">
    <location>
        <begin position="141"/>
        <end position="158"/>
    </location>
</feature>
<feature type="topological domain" description="Extracellular" evidence="1">
    <location>
        <begin position="159"/>
        <end position="196"/>
    </location>
</feature>
<feature type="transmembrane region" description="Helical; Name=5" evidence="1">
    <location>
        <begin position="197"/>
        <end position="219"/>
    </location>
</feature>
<feature type="topological domain" description="Cytoplasmic" evidence="1">
    <location>
        <begin position="220"/>
        <end position="236"/>
    </location>
</feature>
<feature type="transmembrane region" description="Helical; Name=6" evidence="1">
    <location>
        <begin position="237"/>
        <end position="259"/>
    </location>
</feature>
<feature type="topological domain" description="Extracellular" evidence="1">
    <location>
        <begin position="260"/>
        <end position="272"/>
    </location>
</feature>
<feature type="transmembrane region" description="Helical; Name=7" evidence="1">
    <location>
        <begin position="273"/>
        <end position="292"/>
    </location>
</feature>
<feature type="topological domain" description="Cytoplasmic" evidence="1">
    <location>
        <begin position="293"/>
        <end position="313"/>
    </location>
</feature>
<feature type="glycosylation site" description="N-linked (GlcNAc...) asparagine" evidence="1">
    <location>
        <position position="5"/>
    </location>
</feature>
<feature type="disulfide bond" evidence="2">
    <location>
        <begin position="97"/>
        <end position="189"/>
    </location>
</feature>
<gene>
    <name type="primary">OR1G1</name>
</gene>
<accession>Q9TU99</accession>
<comment type="function">
    <text evidence="3">Odorant receptor.</text>
</comment>
<comment type="subcellular location">
    <subcellularLocation>
        <location>Cell membrane</location>
        <topology>Multi-pass membrane protein</topology>
    </subcellularLocation>
</comment>
<comment type="similarity">
    <text evidence="2">Belongs to the G-protein coupled receptor 1 family.</text>
</comment>
<sequence>MEGKNLTSISEFFLLGFSEQLEEQKALFGSFLFMYLVMVAGNLLIILVIITDTQLHTPMYFFLANLSLADACFVSTTVPKMLANIQIQSQAISYSGCLLQLYFFMLFVMLEAFLLAVMAYDHYVAICHPLHYILIMSPGLCVFLVSASWIMNALYSLLHTLLMNSLSFCANHEIPHFFCDIDPLLSLSCADPFTNELVIFITGGLTGLICVLCLIISYTNVFSTILKIPSAQGKRKAFSTCSSHLSVVSLFXGTSFCVYFSPPSTRXAQKDTVASVMYTVVTPMLNPFIYSLRNQEIKSSLRKLIWVRKIHSP</sequence>
<dbReference type="EMBL" id="AF101744">
    <property type="protein sequence ID" value="AAF03325.1"/>
    <property type="molecule type" value="Genomic_DNA"/>
</dbReference>
<dbReference type="RefSeq" id="NP_001009085.1">
    <property type="nucleotide sequence ID" value="NM_001009085.1"/>
</dbReference>
<dbReference type="FunCoup" id="Q9TU99">
    <property type="interactions" value="312"/>
</dbReference>
<dbReference type="STRING" id="9598.ENSPTRP00000054940"/>
<dbReference type="GlyCosmos" id="Q9TU99">
    <property type="glycosylation" value="1 site, No reported glycans"/>
</dbReference>
<dbReference type="PaxDb" id="9598-ENSPTRP00000054940"/>
<dbReference type="GeneID" id="454426"/>
<dbReference type="KEGG" id="ptr:454426"/>
<dbReference type="CTD" id="8390"/>
<dbReference type="eggNOG" id="ENOG502TA75">
    <property type="taxonomic scope" value="Eukaryota"/>
</dbReference>
<dbReference type="InParanoid" id="Q9TU99"/>
<dbReference type="OrthoDB" id="10338at9604"/>
<dbReference type="Proteomes" id="UP000002277">
    <property type="component" value="Unplaced"/>
</dbReference>
<dbReference type="GO" id="GO:0005886">
    <property type="term" value="C:plasma membrane"/>
    <property type="evidence" value="ECO:0000318"/>
    <property type="project" value="GO_Central"/>
</dbReference>
<dbReference type="GO" id="GO:0004930">
    <property type="term" value="F:G protein-coupled receptor activity"/>
    <property type="evidence" value="ECO:0007669"/>
    <property type="project" value="UniProtKB-KW"/>
</dbReference>
<dbReference type="GO" id="GO:0004984">
    <property type="term" value="F:olfactory receptor activity"/>
    <property type="evidence" value="ECO:0000318"/>
    <property type="project" value="GO_Central"/>
</dbReference>
<dbReference type="GO" id="GO:0007165">
    <property type="term" value="P:signal transduction"/>
    <property type="evidence" value="ECO:0000318"/>
    <property type="project" value="GO_Central"/>
</dbReference>
<dbReference type="CDD" id="cd15918">
    <property type="entry name" value="7tmA_OR1_7-like"/>
    <property type="match status" value="1"/>
</dbReference>
<dbReference type="FunFam" id="1.20.1070.10:FF:000009">
    <property type="entry name" value="Olfactory receptor"/>
    <property type="match status" value="1"/>
</dbReference>
<dbReference type="Gene3D" id="1.20.1070.10">
    <property type="entry name" value="Rhodopsin 7-helix transmembrane proteins"/>
    <property type="match status" value="1"/>
</dbReference>
<dbReference type="InterPro" id="IPR000276">
    <property type="entry name" value="GPCR_Rhodpsn"/>
</dbReference>
<dbReference type="InterPro" id="IPR017452">
    <property type="entry name" value="GPCR_Rhodpsn_7TM"/>
</dbReference>
<dbReference type="InterPro" id="IPR000725">
    <property type="entry name" value="Olfact_rcpt"/>
</dbReference>
<dbReference type="PANTHER" id="PTHR48001">
    <property type="entry name" value="OLFACTORY RECEPTOR"/>
    <property type="match status" value="1"/>
</dbReference>
<dbReference type="Pfam" id="PF13853">
    <property type="entry name" value="7tm_4"/>
    <property type="match status" value="1"/>
</dbReference>
<dbReference type="PRINTS" id="PR00237">
    <property type="entry name" value="GPCRRHODOPSN"/>
</dbReference>
<dbReference type="PRINTS" id="PR00245">
    <property type="entry name" value="OLFACTORYR"/>
</dbReference>
<dbReference type="SUPFAM" id="SSF81321">
    <property type="entry name" value="Family A G protein-coupled receptor-like"/>
    <property type="match status" value="1"/>
</dbReference>
<dbReference type="PROSITE" id="PS50262">
    <property type="entry name" value="G_PROTEIN_RECEP_F1_2"/>
    <property type="match status" value="1"/>
</dbReference>
<protein>
    <recommendedName>
        <fullName>Olfactory receptor 1G1</fullName>
    </recommendedName>
</protein>
<name>OR1G1_PANTR</name>
<proteinExistence type="inferred from homology"/>
<keyword id="KW-1003">Cell membrane</keyword>
<keyword id="KW-1015">Disulfide bond</keyword>
<keyword id="KW-0297">G-protein coupled receptor</keyword>
<keyword id="KW-0325">Glycoprotein</keyword>
<keyword id="KW-0472">Membrane</keyword>
<keyword id="KW-0552">Olfaction</keyword>
<keyword id="KW-0675">Receptor</keyword>
<keyword id="KW-1185">Reference proteome</keyword>
<keyword id="KW-0716">Sensory transduction</keyword>
<keyword id="KW-0807">Transducer</keyword>
<keyword id="KW-0812">Transmembrane</keyword>
<keyword id="KW-1133">Transmembrane helix</keyword>
<evidence type="ECO:0000255" key="1"/>
<evidence type="ECO:0000255" key="2">
    <source>
        <dbReference type="PROSITE-ProRule" id="PRU00521"/>
    </source>
</evidence>
<evidence type="ECO:0000305" key="3"/>